<accession>A6WX59</accession>
<feature type="chain" id="PRO_1000012766" description="ATP-dependent protease ATPase subunit HslU">
    <location>
        <begin position="1"/>
        <end position="434"/>
    </location>
</feature>
<feature type="binding site" evidence="1">
    <location>
        <position position="18"/>
    </location>
    <ligand>
        <name>ATP</name>
        <dbReference type="ChEBI" id="CHEBI:30616"/>
    </ligand>
</feature>
<feature type="binding site" evidence="1">
    <location>
        <begin position="60"/>
        <end position="65"/>
    </location>
    <ligand>
        <name>ATP</name>
        <dbReference type="ChEBI" id="CHEBI:30616"/>
    </ligand>
</feature>
<feature type="binding site" evidence="1">
    <location>
        <position position="247"/>
    </location>
    <ligand>
        <name>ATP</name>
        <dbReference type="ChEBI" id="CHEBI:30616"/>
    </ligand>
</feature>
<feature type="binding site" evidence="1">
    <location>
        <position position="312"/>
    </location>
    <ligand>
        <name>ATP</name>
        <dbReference type="ChEBI" id="CHEBI:30616"/>
    </ligand>
</feature>
<feature type="binding site" evidence="1">
    <location>
        <position position="384"/>
    </location>
    <ligand>
        <name>ATP</name>
        <dbReference type="ChEBI" id="CHEBI:30616"/>
    </ligand>
</feature>
<gene>
    <name evidence="1" type="primary">hslU</name>
    <name type="ordered locus">Oant_0841</name>
</gene>
<comment type="function">
    <text evidence="1">ATPase subunit of a proteasome-like degradation complex; this subunit has chaperone activity. The binding of ATP and its subsequent hydrolysis by HslU are essential for unfolding of protein substrates subsequently hydrolyzed by HslV. HslU recognizes the N-terminal part of its protein substrates and unfolds these before they are guided to HslV for hydrolysis.</text>
</comment>
<comment type="subunit">
    <text evidence="1">A double ring-shaped homohexamer of HslV is capped on each side by a ring-shaped HslU homohexamer. The assembly of the HslU/HslV complex is dependent on binding of ATP.</text>
</comment>
<comment type="subcellular location">
    <subcellularLocation>
        <location evidence="1">Cytoplasm</location>
    </subcellularLocation>
</comment>
<comment type="similarity">
    <text evidence="1">Belongs to the ClpX chaperone family. HslU subfamily.</text>
</comment>
<keyword id="KW-0067">ATP-binding</keyword>
<keyword id="KW-0143">Chaperone</keyword>
<keyword id="KW-0963">Cytoplasm</keyword>
<keyword id="KW-0547">Nucleotide-binding</keyword>
<keyword id="KW-1185">Reference proteome</keyword>
<keyword id="KW-0346">Stress response</keyword>
<proteinExistence type="inferred from homology"/>
<reference key="1">
    <citation type="journal article" date="2011" name="J. Bacteriol.">
        <title>Genome of Ochrobactrum anthropi ATCC 49188 T, a versatile opportunistic pathogen and symbiont of several eukaryotic hosts.</title>
        <authorList>
            <person name="Chain P.S."/>
            <person name="Lang D.M."/>
            <person name="Comerci D.J."/>
            <person name="Malfatti S.A."/>
            <person name="Vergez L.M."/>
            <person name="Shin M."/>
            <person name="Ugalde R.A."/>
            <person name="Garcia E."/>
            <person name="Tolmasky M.E."/>
        </authorList>
    </citation>
    <scope>NUCLEOTIDE SEQUENCE [LARGE SCALE GENOMIC DNA]</scope>
    <source>
        <strain>ATCC 49188 / DSM 6882 / CCUG 24695 / JCM 21032 / LMG 3331 / NBRC 15819 / NCTC 12168 / Alc 37</strain>
    </source>
</reference>
<evidence type="ECO:0000255" key="1">
    <source>
        <dbReference type="HAMAP-Rule" id="MF_00249"/>
    </source>
</evidence>
<protein>
    <recommendedName>
        <fullName evidence="1">ATP-dependent protease ATPase subunit HslU</fullName>
    </recommendedName>
    <alternativeName>
        <fullName evidence="1">Unfoldase HslU</fullName>
    </alternativeName>
</protein>
<organism>
    <name type="scientific">Brucella anthropi (strain ATCC 49188 / DSM 6882 / CCUG 24695 / JCM 21032 / LMG 3331 / NBRC 15819 / NCTC 12168 / Alc 37)</name>
    <name type="common">Ochrobactrum anthropi</name>
    <dbReference type="NCBI Taxonomy" id="439375"/>
    <lineage>
        <taxon>Bacteria</taxon>
        <taxon>Pseudomonadati</taxon>
        <taxon>Pseudomonadota</taxon>
        <taxon>Alphaproteobacteria</taxon>
        <taxon>Hyphomicrobiales</taxon>
        <taxon>Brucellaceae</taxon>
        <taxon>Brucella/Ochrobactrum group</taxon>
        <taxon>Brucella</taxon>
    </lineage>
</organism>
<name>HSLU_BRUA4</name>
<dbReference type="EMBL" id="CP000758">
    <property type="protein sequence ID" value="ABS13563.1"/>
    <property type="molecule type" value="Genomic_DNA"/>
</dbReference>
<dbReference type="RefSeq" id="WP_010657665.1">
    <property type="nucleotide sequence ID" value="NC_009667.1"/>
</dbReference>
<dbReference type="SMR" id="A6WX59"/>
<dbReference type="STRING" id="439375.Oant_0841"/>
<dbReference type="GeneID" id="61318713"/>
<dbReference type="KEGG" id="oan:Oant_0841"/>
<dbReference type="eggNOG" id="COG1220">
    <property type="taxonomic scope" value="Bacteria"/>
</dbReference>
<dbReference type="HOGENOM" id="CLU_033123_0_0_5"/>
<dbReference type="PhylomeDB" id="A6WX59"/>
<dbReference type="Proteomes" id="UP000002301">
    <property type="component" value="Chromosome 1"/>
</dbReference>
<dbReference type="GO" id="GO:0009376">
    <property type="term" value="C:HslUV protease complex"/>
    <property type="evidence" value="ECO:0007669"/>
    <property type="project" value="UniProtKB-UniRule"/>
</dbReference>
<dbReference type="GO" id="GO:0005524">
    <property type="term" value="F:ATP binding"/>
    <property type="evidence" value="ECO:0007669"/>
    <property type="project" value="UniProtKB-UniRule"/>
</dbReference>
<dbReference type="GO" id="GO:0016887">
    <property type="term" value="F:ATP hydrolysis activity"/>
    <property type="evidence" value="ECO:0007669"/>
    <property type="project" value="InterPro"/>
</dbReference>
<dbReference type="GO" id="GO:0008233">
    <property type="term" value="F:peptidase activity"/>
    <property type="evidence" value="ECO:0007669"/>
    <property type="project" value="InterPro"/>
</dbReference>
<dbReference type="GO" id="GO:0036402">
    <property type="term" value="F:proteasome-activating activity"/>
    <property type="evidence" value="ECO:0007669"/>
    <property type="project" value="UniProtKB-UniRule"/>
</dbReference>
<dbReference type="GO" id="GO:0043335">
    <property type="term" value="P:protein unfolding"/>
    <property type="evidence" value="ECO:0007669"/>
    <property type="project" value="UniProtKB-UniRule"/>
</dbReference>
<dbReference type="GO" id="GO:0051603">
    <property type="term" value="P:proteolysis involved in protein catabolic process"/>
    <property type="evidence" value="ECO:0007669"/>
    <property type="project" value="TreeGrafter"/>
</dbReference>
<dbReference type="CDD" id="cd19498">
    <property type="entry name" value="RecA-like_HslU"/>
    <property type="match status" value="1"/>
</dbReference>
<dbReference type="FunFam" id="3.40.50.300:FF:000213">
    <property type="entry name" value="ATP-dependent protease ATPase subunit HslU"/>
    <property type="match status" value="1"/>
</dbReference>
<dbReference type="FunFam" id="3.40.50.300:FF:000220">
    <property type="entry name" value="ATP-dependent protease ATPase subunit HslU"/>
    <property type="match status" value="1"/>
</dbReference>
<dbReference type="Gene3D" id="1.10.8.60">
    <property type="match status" value="1"/>
</dbReference>
<dbReference type="Gene3D" id="1.10.8.10">
    <property type="entry name" value="DNA helicase RuvA subunit, C-terminal domain"/>
    <property type="match status" value="1"/>
</dbReference>
<dbReference type="Gene3D" id="3.40.50.300">
    <property type="entry name" value="P-loop containing nucleotide triphosphate hydrolases"/>
    <property type="match status" value="1"/>
</dbReference>
<dbReference type="HAMAP" id="MF_00249">
    <property type="entry name" value="HslU"/>
    <property type="match status" value="1"/>
</dbReference>
<dbReference type="InterPro" id="IPR003593">
    <property type="entry name" value="AAA+_ATPase"/>
</dbReference>
<dbReference type="InterPro" id="IPR050052">
    <property type="entry name" value="ATP-dep_Clp_protease_ClpX"/>
</dbReference>
<dbReference type="InterPro" id="IPR003959">
    <property type="entry name" value="ATPase_AAA_core"/>
</dbReference>
<dbReference type="InterPro" id="IPR019489">
    <property type="entry name" value="Clp_ATPase_C"/>
</dbReference>
<dbReference type="InterPro" id="IPR004491">
    <property type="entry name" value="HslU"/>
</dbReference>
<dbReference type="InterPro" id="IPR027417">
    <property type="entry name" value="P-loop_NTPase"/>
</dbReference>
<dbReference type="NCBIfam" id="TIGR00390">
    <property type="entry name" value="hslU"/>
    <property type="match status" value="1"/>
</dbReference>
<dbReference type="NCBIfam" id="NF003544">
    <property type="entry name" value="PRK05201.1"/>
    <property type="match status" value="1"/>
</dbReference>
<dbReference type="PANTHER" id="PTHR48102">
    <property type="entry name" value="ATP-DEPENDENT CLP PROTEASE ATP-BINDING SUBUNIT CLPX-LIKE, MITOCHONDRIAL-RELATED"/>
    <property type="match status" value="1"/>
</dbReference>
<dbReference type="PANTHER" id="PTHR48102:SF3">
    <property type="entry name" value="ATP-DEPENDENT PROTEASE ATPASE SUBUNIT HSLU"/>
    <property type="match status" value="1"/>
</dbReference>
<dbReference type="Pfam" id="PF00004">
    <property type="entry name" value="AAA"/>
    <property type="match status" value="1"/>
</dbReference>
<dbReference type="Pfam" id="PF07724">
    <property type="entry name" value="AAA_2"/>
    <property type="match status" value="1"/>
</dbReference>
<dbReference type="SMART" id="SM00382">
    <property type="entry name" value="AAA"/>
    <property type="match status" value="1"/>
</dbReference>
<dbReference type="SMART" id="SM01086">
    <property type="entry name" value="ClpB_D2-small"/>
    <property type="match status" value="1"/>
</dbReference>
<dbReference type="SUPFAM" id="SSF52540">
    <property type="entry name" value="P-loop containing nucleoside triphosphate hydrolases"/>
    <property type="match status" value="1"/>
</dbReference>
<sequence>MSNFSPREIVSELDRFIIGQNDAKRAVAIALRNRWRRQQLEGQMREEVMPKNILMIGPTGVGKTEISRRLAKLAGAPFVKVEATKFTEVGYVGRDVEQIVRDLVEVAITLVREKRRDDVKAKAHLNAEERVLDALVGKTASPATRDSFRKKLRNGEMDDKEIEIEVADTGSGPSFEIPGMPGANIGVMNLSDMLGKAMGGRTKTRKTTVKDSYPILINDESDKLLDQDQIVQEALRVTEDEGIVFIDEIDKIASREGGMGAGVSREGVQRDLLPLVEGTTVATKYGPVKTDHVLFIASGAFHVSKPSDLLPELQGRLPIRVELNALTREDFRRILTETEASLIKQYIALMETEEVKLEITDDAIDALADIAVDLNATVENIGARRLQTVMERVLDEISYTAPDKTGATFVIDAAYVKDKIGSLAKNTDLSRFIL</sequence>